<protein>
    <recommendedName>
        <fullName evidence="1">Putative phosphoenolpyruvate synthase regulatory protein</fullName>
        <shortName evidence="1">PEP synthase regulatory protein</shortName>
        <shortName evidence="1">PSRP</shortName>
        <ecNumber evidence="1">2.7.11.33</ecNumber>
        <ecNumber evidence="1">2.7.4.28</ecNumber>
    </recommendedName>
    <alternativeName>
        <fullName evidence="1">Pyruvate, water dikinase regulatory protein</fullName>
    </alternativeName>
</protein>
<keyword id="KW-0418">Kinase</keyword>
<keyword id="KW-0547">Nucleotide-binding</keyword>
<keyword id="KW-0723">Serine/threonine-protein kinase</keyword>
<keyword id="KW-0808">Transferase</keyword>
<evidence type="ECO:0000255" key="1">
    <source>
        <dbReference type="HAMAP-Rule" id="MF_01062"/>
    </source>
</evidence>
<sequence length="272" mass="30950">MKRSAFFISDGTGITAETLGQSLLAQFENITFNKFTRPYIDSVEKARAMVQQINNAADKDDVRPIIFDTIVNQDIREILATSNGFMIDIFSTFLAPLEQELSSHSSYSVGKSHSIGHNSNYMERIEAVNFALDNDDGARTHYYDKADIILVGVSRCGKTPTCLYMAMQFGIRAANYPLTEDDMERLQLPAALKEHRSKLFGLTIDPDRLTAIRHERKPNSRYSSYAQCEFEVREVESLFRRENIPNINSTHFSVEEISAKVLVEKGVERRFK</sequence>
<feature type="chain" id="PRO_0000196692" description="Putative phosphoenolpyruvate synthase regulatory protein">
    <location>
        <begin position="1"/>
        <end position="272"/>
    </location>
</feature>
<feature type="binding site" evidence="1">
    <location>
        <begin position="152"/>
        <end position="159"/>
    </location>
    <ligand>
        <name>ADP</name>
        <dbReference type="ChEBI" id="CHEBI:456216"/>
    </ligand>
</feature>
<dbReference type="EC" id="2.7.11.33" evidence="1"/>
<dbReference type="EC" id="2.7.4.28" evidence="1"/>
<dbReference type="EMBL" id="CP000058">
    <property type="protein sequence ID" value="AAZ35054.1"/>
    <property type="molecule type" value="Genomic_DNA"/>
</dbReference>
<dbReference type="RefSeq" id="WP_002553036.1">
    <property type="nucleotide sequence ID" value="NC_005773.3"/>
</dbReference>
<dbReference type="SMR" id="Q48JZ6"/>
<dbReference type="KEGG" id="psp:PSPPH_2060"/>
<dbReference type="eggNOG" id="COG1806">
    <property type="taxonomic scope" value="Bacteria"/>
</dbReference>
<dbReference type="HOGENOM" id="CLU_046206_1_0_6"/>
<dbReference type="Proteomes" id="UP000000551">
    <property type="component" value="Chromosome"/>
</dbReference>
<dbReference type="GO" id="GO:0043531">
    <property type="term" value="F:ADP binding"/>
    <property type="evidence" value="ECO:0007669"/>
    <property type="project" value="UniProtKB-UniRule"/>
</dbReference>
<dbReference type="GO" id="GO:0005524">
    <property type="term" value="F:ATP binding"/>
    <property type="evidence" value="ECO:0007669"/>
    <property type="project" value="InterPro"/>
</dbReference>
<dbReference type="GO" id="GO:0016776">
    <property type="term" value="F:phosphotransferase activity, phosphate group as acceptor"/>
    <property type="evidence" value="ECO:0007669"/>
    <property type="project" value="UniProtKB-UniRule"/>
</dbReference>
<dbReference type="GO" id="GO:0004674">
    <property type="term" value="F:protein serine/threonine kinase activity"/>
    <property type="evidence" value="ECO:0007669"/>
    <property type="project" value="UniProtKB-UniRule"/>
</dbReference>
<dbReference type="HAMAP" id="MF_01062">
    <property type="entry name" value="PSRP"/>
    <property type="match status" value="1"/>
</dbReference>
<dbReference type="InterPro" id="IPR005177">
    <property type="entry name" value="Kinase-pyrophosphorylase"/>
</dbReference>
<dbReference type="InterPro" id="IPR026530">
    <property type="entry name" value="PSRP"/>
</dbReference>
<dbReference type="NCBIfam" id="NF003742">
    <property type="entry name" value="PRK05339.1"/>
    <property type="match status" value="1"/>
</dbReference>
<dbReference type="PANTHER" id="PTHR31756">
    <property type="entry name" value="PYRUVATE, PHOSPHATE DIKINASE REGULATORY PROTEIN 1, CHLOROPLASTIC"/>
    <property type="match status" value="1"/>
</dbReference>
<dbReference type="PANTHER" id="PTHR31756:SF3">
    <property type="entry name" value="PYRUVATE, PHOSPHATE DIKINASE REGULATORY PROTEIN 1, CHLOROPLASTIC"/>
    <property type="match status" value="1"/>
</dbReference>
<dbReference type="Pfam" id="PF03618">
    <property type="entry name" value="Kinase-PPPase"/>
    <property type="match status" value="1"/>
</dbReference>
<name>PSRP_PSE14</name>
<reference key="1">
    <citation type="journal article" date="2005" name="J. Bacteriol.">
        <title>Whole-genome sequence analysis of Pseudomonas syringae pv. phaseolicola 1448A reveals divergence among pathovars in genes involved in virulence and transposition.</title>
        <authorList>
            <person name="Joardar V."/>
            <person name="Lindeberg M."/>
            <person name="Jackson R.W."/>
            <person name="Selengut J."/>
            <person name="Dodson R."/>
            <person name="Brinkac L.M."/>
            <person name="Daugherty S.C."/>
            <person name="DeBoy R.T."/>
            <person name="Durkin A.S."/>
            <person name="Gwinn Giglio M."/>
            <person name="Madupu R."/>
            <person name="Nelson W.C."/>
            <person name="Rosovitz M.J."/>
            <person name="Sullivan S.A."/>
            <person name="Crabtree J."/>
            <person name="Creasy T."/>
            <person name="Davidsen T.M."/>
            <person name="Haft D.H."/>
            <person name="Zafar N."/>
            <person name="Zhou L."/>
            <person name="Halpin R."/>
            <person name="Holley T."/>
            <person name="Khouri H.M."/>
            <person name="Feldblyum T.V."/>
            <person name="White O."/>
            <person name="Fraser C.M."/>
            <person name="Chatterjee A.K."/>
            <person name="Cartinhour S."/>
            <person name="Schneider D."/>
            <person name="Mansfield J.W."/>
            <person name="Collmer A."/>
            <person name="Buell R."/>
        </authorList>
    </citation>
    <scope>NUCLEOTIDE SEQUENCE [LARGE SCALE GENOMIC DNA]</scope>
    <source>
        <strain>1448A / Race 6</strain>
    </source>
</reference>
<proteinExistence type="inferred from homology"/>
<accession>Q48JZ6</accession>
<comment type="function">
    <text evidence="1">Bifunctional serine/threonine kinase and phosphorylase involved in the regulation of the phosphoenolpyruvate synthase (PEPS) by catalyzing its phosphorylation/dephosphorylation.</text>
</comment>
<comment type="catalytic activity">
    <reaction evidence="1">
        <text>[pyruvate, water dikinase] + ADP = [pyruvate, water dikinase]-phosphate + AMP + H(+)</text>
        <dbReference type="Rhea" id="RHEA:46020"/>
        <dbReference type="Rhea" id="RHEA-COMP:11425"/>
        <dbReference type="Rhea" id="RHEA-COMP:11426"/>
        <dbReference type="ChEBI" id="CHEBI:15378"/>
        <dbReference type="ChEBI" id="CHEBI:43176"/>
        <dbReference type="ChEBI" id="CHEBI:68546"/>
        <dbReference type="ChEBI" id="CHEBI:456215"/>
        <dbReference type="ChEBI" id="CHEBI:456216"/>
        <dbReference type="EC" id="2.7.11.33"/>
    </reaction>
</comment>
<comment type="catalytic activity">
    <reaction evidence="1">
        <text>[pyruvate, water dikinase]-phosphate + phosphate + H(+) = [pyruvate, water dikinase] + diphosphate</text>
        <dbReference type="Rhea" id="RHEA:48580"/>
        <dbReference type="Rhea" id="RHEA-COMP:11425"/>
        <dbReference type="Rhea" id="RHEA-COMP:11426"/>
        <dbReference type="ChEBI" id="CHEBI:15378"/>
        <dbReference type="ChEBI" id="CHEBI:33019"/>
        <dbReference type="ChEBI" id="CHEBI:43176"/>
        <dbReference type="ChEBI" id="CHEBI:43474"/>
        <dbReference type="ChEBI" id="CHEBI:68546"/>
        <dbReference type="EC" id="2.7.4.28"/>
    </reaction>
</comment>
<comment type="similarity">
    <text evidence="1">Belongs to the pyruvate, phosphate/water dikinase regulatory protein family. PSRP subfamily.</text>
</comment>
<gene>
    <name type="ordered locus">PSPPH_2060</name>
</gene>
<organism>
    <name type="scientific">Pseudomonas savastanoi pv. phaseolicola (strain 1448A / Race 6)</name>
    <name type="common">Pseudomonas syringae pv. phaseolicola (strain 1448A / Race 6)</name>
    <dbReference type="NCBI Taxonomy" id="264730"/>
    <lineage>
        <taxon>Bacteria</taxon>
        <taxon>Pseudomonadati</taxon>
        <taxon>Pseudomonadota</taxon>
        <taxon>Gammaproteobacteria</taxon>
        <taxon>Pseudomonadales</taxon>
        <taxon>Pseudomonadaceae</taxon>
        <taxon>Pseudomonas</taxon>
    </lineage>
</organism>